<dbReference type="EMBL" id="Z49581">
    <property type="protein sequence ID" value="CAA89609.1"/>
    <property type="molecule type" value="Genomic_DNA"/>
</dbReference>
<dbReference type="EMBL" id="L47993">
    <property type="protein sequence ID" value="AAB39305.1"/>
    <property type="molecule type" value="Genomic_DNA"/>
</dbReference>
<dbReference type="EMBL" id="AY557889">
    <property type="protein sequence ID" value="AAS56215.1"/>
    <property type="molecule type" value="Genomic_DNA"/>
</dbReference>
<dbReference type="EMBL" id="BK006943">
    <property type="protein sequence ID" value="DAA08867.1"/>
    <property type="molecule type" value="Genomic_DNA"/>
</dbReference>
<dbReference type="PIR" id="S57101">
    <property type="entry name" value="S57101"/>
</dbReference>
<dbReference type="RefSeq" id="NP_012615.3">
    <property type="nucleotide sequence ID" value="NM_001181739.3"/>
</dbReference>
<dbReference type="PDB" id="5J9Q">
    <property type="method" value="X-ray"/>
    <property type="resolution" value="3.25 A"/>
    <property type="chains" value="B/F/J=1-113"/>
</dbReference>
<dbReference type="PDB" id="5J9T">
    <property type="method" value="X-ray"/>
    <property type="resolution" value="2.70 A"/>
    <property type="chains" value="B/F/J=1-113"/>
</dbReference>
<dbReference type="PDB" id="5J9U">
    <property type="method" value="X-ray"/>
    <property type="resolution" value="2.95 A"/>
    <property type="chains" value="B/F/J=1-113"/>
</dbReference>
<dbReference type="PDB" id="5J9W">
    <property type="method" value="X-ray"/>
    <property type="resolution" value="2.80 A"/>
    <property type="chains" value="B/F/J=1-113"/>
</dbReference>
<dbReference type="PDB" id="7VVU">
    <property type="method" value="EM"/>
    <property type="resolution" value="3.40 A"/>
    <property type="chains" value="Y=1-113"/>
</dbReference>
<dbReference type="PDB" id="7VVZ">
    <property type="method" value="EM"/>
    <property type="resolution" value="8.80 A"/>
    <property type="chains" value="Y=1-113"/>
</dbReference>
<dbReference type="PDBsum" id="5J9Q"/>
<dbReference type="PDBsum" id="5J9T"/>
<dbReference type="PDBsum" id="5J9U"/>
<dbReference type="PDBsum" id="5J9W"/>
<dbReference type="PDBsum" id="7VVU"/>
<dbReference type="PDBsum" id="7VVZ"/>
<dbReference type="EMDB" id="EMD-32150"/>
<dbReference type="SMR" id="P47128"/>
<dbReference type="BioGRID" id="33837">
    <property type="interactions" value="265"/>
</dbReference>
<dbReference type="ComplexPortal" id="CPX-1810">
    <property type="entry name" value="NuA3 histone acetyltransferase complex"/>
</dbReference>
<dbReference type="ComplexPortal" id="CPX-3155">
    <property type="entry name" value="NuA4 histone acetyltransferase complex"/>
</dbReference>
<dbReference type="DIP" id="DIP-4058N"/>
<dbReference type="FunCoup" id="P47128">
    <property type="interactions" value="148"/>
</dbReference>
<dbReference type="IntAct" id="P47128">
    <property type="interactions" value="23"/>
</dbReference>
<dbReference type="MINT" id="P47128"/>
<dbReference type="STRING" id="4932.YJR082C"/>
<dbReference type="iPTMnet" id="P47128"/>
<dbReference type="PaxDb" id="4932-YJR082C"/>
<dbReference type="PeptideAtlas" id="P47128"/>
<dbReference type="DNASU" id="853544"/>
<dbReference type="EnsemblFungi" id="YJR082C_mRNA">
    <property type="protein sequence ID" value="YJR082C"/>
    <property type="gene ID" value="YJR082C"/>
</dbReference>
<dbReference type="GeneID" id="853544"/>
<dbReference type="KEGG" id="sce:YJR082C"/>
<dbReference type="AGR" id="SGD:S000003842"/>
<dbReference type="SGD" id="S000003842">
    <property type="gene designation" value="EAF6"/>
</dbReference>
<dbReference type="VEuPathDB" id="FungiDB:YJR082C"/>
<dbReference type="eggNOG" id="KOG3856">
    <property type="taxonomic scope" value="Eukaryota"/>
</dbReference>
<dbReference type="HOGENOM" id="CLU_093901_2_1_1"/>
<dbReference type="InParanoid" id="P47128"/>
<dbReference type="OMA" id="FVKQQEG"/>
<dbReference type="OrthoDB" id="440324at2759"/>
<dbReference type="BioCyc" id="YEAST:G3O-31710-MONOMER"/>
<dbReference type="BioGRID-ORCS" id="853544">
    <property type="hits" value="0 hits in 10 CRISPR screens"/>
</dbReference>
<dbReference type="PRO" id="PR:P47128"/>
<dbReference type="Proteomes" id="UP000002311">
    <property type="component" value="Chromosome X"/>
</dbReference>
<dbReference type="RNAct" id="P47128">
    <property type="molecule type" value="protein"/>
</dbReference>
<dbReference type="GO" id="GO:0033100">
    <property type="term" value="C:NuA3 histone acetyltransferase complex"/>
    <property type="evidence" value="ECO:0000314"/>
    <property type="project" value="SGD"/>
</dbReference>
<dbReference type="GO" id="GO:1990467">
    <property type="term" value="C:NuA3a histone acetyltransferase complex"/>
    <property type="evidence" value="ECO:0000314"/>
    <property type="project" value="SGD"/>
</dbReference>
<dbReference type="GO" id="GO:1990468">
    <property type="term" value="C:NuA3b histone acetyltransferase complex"/>
    <property type="evidence" value="ECO:0000314"/>
    <property type="project" value="SGD"/>
</dbReference>
<dbReference type="GO" id="GO:0035267">
    <property type="term" value="C:NuA4 histone acetyltransferase complex"/>
    <property type="evidence" value="ECO:0000314"/>
    <property type="project" value="SGD"/>
</dbReference>
<dbReference type="GO" id="GO:0005634">
    <property type="term" value="C:nucleus"/>
    <property type="evidence" value="ECO:0007005"/>
    <property type="project" value="SGD"/>
</dbReference>
<dbReference type="GO" id="GO:0006338">
    <property type="term" value="P:chromatin remodeling"/>
    <property type="evidence" value="ECO:0007669"/>
    <property type="project" value="GOC"/>
</dbReference>
<dbReference type="GO" id="GO:0006281">
    <property type="term" value="P:DNA repair"/>
    <property type="evidence" value="ECO:0000314"/>
    <property type="project" value="SGD"/>
</dbReference>
<dbReference type="GO" id="GO:0006351">
    <property type="term" value="P:DNA-templated transcription"/>
    <property type="evidence" value="ECO:0000303"/>
    <property type="project" value="ComplexPortal"/>
</dbReference>
<dbReference type="InterPro" id="IPR015418">
    <property type="entry name" value="Eaf6"/>
</dbReference>
<dbReference type="PANTHER" id="PTHR13476">
    <property type="entry name" value="CHROMATIN MODIFICATION-RELATED PROTEIN MEAF6"/>
    <property type="match status" value="1"/>
</dbReference>
<dbReference type="Pfam" id="PF09340">
    <property type="entry name" value="NuA4"/>
    <property type="match status" value="1"/>
</dbReference>
<name>EAF6_YEAST</name>
<proteinExistence type="evidence at protein level"/>
<sequence>MTDELKSYEALKAELKKSLQDRREQEDTFDNLQQEIYDKETEYFSHNSNNNHSGHGGAHGSKSHYSGNIIKGFDTFSKSHHSHADSAFNNNDRIFSLSSATYVKQQHGQSQND</sequence>
<organism>
    <name type="scientific">Saccharomyces cerevisiae (strain ATCC 204508 / S288c)</name>
    <name type="common">Baker's yeast</name>
    <dbReference type="NCBI Taxonomy" id="559292"/>
    <lineage>
        <taxon>Eukaryota</taxon>
        <taxon>Fungi</taxon>
        <taxon>Dikarya</taxon>
        <taxon>Ascomycota</taxon>
        <taxon>Saccharomycotina</taxon>
        <taxon>Saccharomycetes</taxon>
        <taxon>Saccharomycetales</taxon>
        <taxon>Saccharomycetaceae</taxon>
        <taxon>Saccharomyces</taxon>
    </lineage>
</organism>
<comment type="function">
    <text evidence="5 7 8">Component of the NuA4 histone acetyltransferase complex which is involved in transcriptional activation of selected genes principally by acetylation of nucleosomal histone H4 and H2A. The NuA4 complex is also involved in DNA repair (PubMed:15485911, PubMed:15353583). Component of the NuA3 histone acetyltransferase complex. The NuA3 HAT complex has 2 functionally distinct forms. NuA3a binds H3K4me3, through the PHD finger of YNG1, and acetylates H3K14 at the promoter region of actively transcribed genes to promote transcription initiation. NuA3b binds H3K36me3 at the coding regions of actively transcribed genes, through the PWWP domain of PDP3, and coordinates transcription elongation (PubMed:17157260, PubMed:25104842).</text>
</comment>
<comment type="subunit">
    <text evidence="5 6 7 8 9 10">Component of the NuA4 histone acetyltransferase complex composed of at least ACT1, ARP4, YAF9, VID21, SWC4, EAF3, EAF5, EAF6, EAF7, EPL1, ESA1, TRA1 and YNG2 (PubMed:15485911, PubMed:15353583, PubMed:27594449, PubMed:36198799). Component of the NuA3 histone acetyltransferase (HAT) complex. The NuA3 HAT complex has 2 functionally distinct forms that participate in transcription. The NuA3b HAT complex contains an additional subunit, PDP3 (PubMed:17157260, PubMed:25104842).</text>
</comment>
<comment type="subcellular location">
    <subcellularLocation>
        <location evidence="3">Nucleus</location>
    </subcellularLocation>
</comment>
<comment type="miscellaneous">
    <text evidence="4">Present with 504 molecules/cell in log phase SD medium.</text>
</comment>
<comment type="similarity">
    <text evidence="11">Belongs to the EAF6 family.</text>
</comment>
<protein>
    <recommendedName>
        <fullName>Chromatin modification-related protein EAF6</fullName>
    </recommendedName>
    <alternativeName>
        <fullName>ESA1-associated factor 6</fullName>
    </alternativeName>
</protein>
<gene>
    <name type="primary">EAF6</name>
    <name type="ordered locus">YJR082C</name>
    <name type="ORF">J1854</name>
</gene>
<feature type="chain" id="PRO_0000086901" description="Chromatin modification-related protein EAF6">
    <location>
        <begin position="1"/>
        <end position="113"/>
    </location>
</feature>
<feature type="region of interest" description="Disordered" evidence="2">
    <location>
        <begin position="36"/>
        <end position="64"/>
    </location>
</feature>
<feature type="coiled-coil region" evidence="1">
    <location>
        <begin position="1"/>
        <end position="43"/>
    </location>
</feature>
<feature type="helix" evidence="18">
    <location>
        <begin position="2"/>
        <end position="6"/>
    </location>
</feature>
<feature type="helix" evidence="18">
    <location>
        <begin position="8"/>
        <end position="43"/>
    </location>
</feature>
<feature type="turn" evidence="18">
    <location>
        <begin position="69"/>
        <end position="71"/>
    </location>
</feature>
<feature type="helix" evidence="18">
    <location>
        <begin position="90"/>
        <end position="92"/>
    </location>
</feature>
<feature type="helix" evidence="18">
    <location>
        <begin position="96"/>
        <end position="98"/>
    </location>
</feature>
<feature type="helix" evidence="18">
    <location>
        <begin position="100"/>
        <end position="106"/>
    </location>
</feature>
<keyword id="KW-0002">3D-structure</keyword>
<keyword id="KW-0156">Chromatin regulator</keyword>
<keyword id="KW-0175">Coiled coil</keyword>
<keyword id="KW-0227">DNA damage</keyword>
<keyword id="KW-0234">DNA repair</keyword>
<keyword id="KW-0539">Nucleus</keyword>
<keyword id="KW-1185">Reference proteome</keyword>
<keyword id="KW-0804">Transcription</keyword>
<keyword id="KW-0805">Transcription regulation</keyword>
<accession>P47128</accession>
<accession>D6VWQ1</accession>
<reference key="1">
    <citation type="journal article" date="1996" name="Yeast">
        <title>Analysis of a 62 kb DNA sequence of chromosome X reveals 36 open reading frames and a gene cluster with a counterpart on chromosome XI.</title>
        <authorList>
            <person name="Huang M.-E."/>
            <person name="Manus V."/>
            <person name="Chuat J.-C."/>
            <person name="Galibert F."/>
        </authorList>
    </citation>
    <scope>NUCLEOTIDE SEQUENCE [GENOMIC DNA]</scope>
    <source>
        <strain>ATCC 96604 / S288c / FY1679</strain>
    </source>
</reference>
<reference key="2">
    <citation type="journal article" date="1996" name="EMBO J.">
        <title>Complete nucleotide sequence of Saccharomyces cerevisiae chromosome X.</title>
        <authorList>
            <person name="Galibert F."/>
            <person name="Alexandraki D."/>
            <person name="Baur A."/>
            <person name="Boles E."/>
            <person name="Chalwatzis N."/>
            <person name="Chuat J.-C."/>
            <person name="Coster F."/>
            <person name="Cziepluch C."/>
            <person name="de Haan M."/>
            <person name="Domdey H."/>
            <person name="Durand P."/>
            <person name="Entian K.-D."/>
            <person name="Gatius M."/>
            <person name="Goffeau A."/>
            <person name="Grivell L.A."/>
            <person name="Hennemann A."/>
            <person name="Herbert C.J."/>
            <person name="Heumann K."/>
            <person name="Hilger F."/>
            <person name="Hollenberg C.P."/>
            <person name="Huang M.-E."/>
            <person name="Jacq C."/>
            <person name="Jauniaux J.-C."/>
            <person name="Katsoulou C."/>
            <person name="Kirchrath L."/>
            <person name="Kleine K."/>
            <person name="Kordes E."/>
            <person name="Koetter P."/>
            <person name="Liebl S."/>
            <person name="Louis E.J."/>
            <person name="Manus V."/>
            <person name="Mewes H.-W."/>
            <person name="Miosga T."/>
            <person name="Obermaier B."/>
            <person name="Perea J."/>
            <person name="Pohl T.M."/>
            <person name="Portetelle D."/>
            <person name="Pujol A."/>
            <person name="Purnelle B."/>
            <person name="Ramezani Rad M."/>
            <person name="Rasmussen S.W."/>
            <person name="Rose M."/>
            <person name="Rossau R."/>
            <person name="Schaaff-Gerstenschlaeger I."/>
            <person name="Smits P.H.M."/>
            <person name="Scarcez T."/>
            <person name="Soriano N."/>
            <person name="To Van D."/>
            <person name="Tzermia M."/>
            <person name="Van Broekhoven A."/>
            <person name="Vandenbol M."/>
            <person name="Wedler H."/>
            <person name="von Wettstein D."/>
            <person name="Wambutt R."/>
            <person name="Zagulski M."/>
            <person name="Zollner A."/>
            <person name="Karpfinger-Hartl L."/>
        </authorList>
    </citation>
    <scope>NUCLEOTIDE SEQUENCE [LARGE SCALE GENOMIC DNA]</scope>
    <source>
        <strain>ATCC 204508 / S288c</strain>
    </source>
</reference>
<reference key="3">
    <citation type="journal article" date="2014" name="G3 (Bethesda)">
        <title>The reference genome sequence of Saccharomyces cerevisiae: Then and now.</title>
        <authorList>
            <person name="Engel S.R."/>
            <person name="Dietrich F.S."/>
            <person name="Fisk D.G."/>
            <person name="Binkley G."/>
            <person name="Balakrishnan R."/>
            <person name="Costanzo M.C."/>
            <person name="Dwight S.S."/>
            <person name="Hitz B.C."/>
            <person name="Karra K."/>
            <person name="Nash R.S."/>
            <person name="Weng S."/>
            <person name="Wong E.D."/>
            <person name="Lloyd P."/>
            <person name="Skrzypek M.S."/>
            <person name="Miyasato S.R."/>
            <person name="Simison M."/>
            <person name="Cherry J.M."/>
        </authorList>
    </citation>
    <scope>GENOME REANNOTATION</scope>
    <source>
        <strain>ATCC 204508 / S288c</strain>
    </source>
</reference>
<reference key="4">
    <citation type="journal article" date="2007" name="Genome Res.">
        <title>Approaching a complete repository of sequence-verified protein-encoding clones for Saccharomyces cerevisiae.</title>
        <authorList>
            <person name="Hu Y."/>
            <person name="Rolfs A."/>
            <person name="Bhullar B."/>
            <person name="Murthy T.V.S."/>
            <person name="Zhu C."/>
            <person name="Berger M.F."/>
            <person name="Camargo A.A."/>
            <person name="Kelley F."/>
            <person name="McCarron S."/>
            <person name="Jepson D."/>
            <person name="Richardson A."/>
            <person name="Raphael J."/>
            <person name="Moreira D."/>
            <person name="Taycher E."/>
            <person name="Zuo D."/>
            <person name="Mohr S."/>
            <person name="Kane M.F."/>
            <person name="Williamson J."/>
            <person name="Simpson A.J.G."/>
            <person name="Bulyk M.L."/>
            <person name="Harlow E."/>
            <person name="Marsischky G."/>
            <person name="Kolodner R.D."/>
            <person name="LaBaer J."/>
        </authorList>
    </citation>
    <scope>NUCLEOTIDE SEQUENCE [GENOMIC DNA]</scope>
    <source>
        <strain>ATCC 204508 / S288c</strain>
    </source>
</reference>
<reference key="5">
    <citation type="journal article" date="2003" name="Nature">
        <title>Global analysis of protein localization in budding yeast.</title>
        <authorList>
            <person name="Huh W.-K."/>
            <person name="Falvo J.V."/>
            <person name="Gerke L.C."/>
            <person name="Carroll A.S."/>
            <person name="Howson R.W."/>
            <person name="Weissman J.S."/>
            <person name="O'Shea E.K."/>
        </authorList>
    </citation>
    <scope>SUBCELLULAR LOCATION [LARGE SCALE ANALYSIS]</scope>
</reference>
<reference key="6">
    <citation type="journal article" date="2003" name="Nature">
        <title>Global analysis of protein expression in yeast.</title>
        <authorList>
            <person name="Ghaemmaghami S."/>
            <person name="Huh W.-K."/>
            <person name="Bower K."/>
            <person name="Howson R.W."/>
            <person name="Belle A."/>
            <person name="Dephoure N."/>
            <person name="O'Shea E.K."/>
            <person name="Weissman J.S."/>
        </authorList>
    </citation>
    <scope>LEVEL OF PROTEIN EXPRESSION [LARGE SCALE ANALYSIS]</scope>
</reference>
<reference key="7">
    <citation type="journal article" date="2004" name="Mol. Cell. Biol.">
        <title>The Yaf9 component of the SWR1 and NuA4 complexes is required for proper gene expression, histone H4 acetylation, and Htz1 replacement near telomeres.</title>
        <authorList>
            <person name="Zhang H."/>
            <person name="Richardson D.O."/>
            <person name="Roberts D.N."/>
            <person name="Utley R.T."/>
            <person name="Erdjument-Bromage H."/>
            <person name="Tempst P."/>
            <person name="Cote J."/>
            <person name="Cairns B.R."/>
        </authorList>
    </citation>
    <scope>IDENTIFICATION IN THE NUA4 COMPLEX</scope>
    <scope>IDENTIFICATION BY MASS SPECTROMETRY</scope>
</reference>
<reference key="8">
    <citation type="journal article" date="2004" name="Proc. Natl. Acad. Sci. U.S.A.">
        <title>Regulation of chromosome stability by the histone H2A variant Htz1, the Swr1 chromatin remodeling complex, and the histone acetyltransferase NuA4.</title>
        <authorList>
            <person name="Krogan N.J."/>
            <person name="Baetz K."/>
            <person name="Keogh M.-C."/>
            <person name="Datta N."/>
            <person name="Sawa C."/>
            <person name="Kwok T.C.Y."/>
            <person name="Thompson N.J."/>
            <person name="Davey M.G."/>
            <person name="Pootoolal J."/>
            <person name="Hughes T.R."/>
            <person name="Emili A."/>
            <person name="Buratowski S."/>
            <person name="Hieter P."/>
            <person name="Greenblatt J.F."/>
        </authorList>
    </citation>
    <scope>IDENTIFICATION IN THE NUA4 COMPLEX</scope>
    <scope>IDENTIFICATION BY MASS SPECTROMETRY</scope>
</reference>
<reference key="9">
    <citation type="journal article" date="2006" name="Mol. Cell">
        <title>Yng1 PHD finger binding to H3 trimethylated at K4 promotes NuA3 HAT activity at K14 of H3 and transcription at a subset of targeted ORFs.</title>
        <authorList>
            <person name="Taverna S.D."/>
            <person name="Ilin S."/>
            <person name="Rogers R.S."/>
            <person name="Tanny J.C."/>
            <person name="Lavender H."/>
            <person name="Li H."/>
            <person name="Baker L."/>
            <person name="Boyle J."/>
            <person name="Blair L.P."/>
            <person name="Chait B.T."/>
            <person name="Patel D.J."/>
            <person name="Aitchison J.D."/>
            <person name="Tackett A.J."/>
            <person name="Allis C.D."/>
        </authorList>
    </citation>
    <scope>FUNCTION OF THE NUA3 COMPLEX</scope>
    <scope>IDENTIFICATION IN THE NUA3 COMPLEX</scope>
    <scope>IDENTIFICATION BY MASS SPECTROMETRY</scope>
</reference>
<reference key="10">
    <citation type="journal article" date="2014" name="Mol. Cell. Proteomics">
        <title>A PWWP domain-containing protein targets the NuA3 acetyltransferase complex via histone H3 lysine 36 trimethylation to coordinate transcriptional elongation at coding regions.</title>
        <authorList>
            <person name="Gilbert T.M."/>
            <person name="McDaniel S.L."/>
            <person name="Byrum S.D."/>
            <person name="Cades J.A."/>
            <person name="Dancy B.C."/>
            <person name="Wade H."/>
            <person name="Tackett A.J."/>
            <person name="Strahl B.D."/>
            <person name="Taverna S.D."/>
        </authorList>
    </citation>
    <scope>SUBUNIT</scope>
</reference>
<reference evidence="12 13 14 15" key="11">
    <citation type="journal article" date="2016" name="Mol. Cell">
        <title>The NuA4 core complex acetylates nucleosomal histone H4 through a double recognition mechanism.</title>
        <authorList>
            <person name="Xu P."/>
            <person name="Li C."/>
            <person name="Chen Z."/>
            <person name="Jiang S."/>
            <person name="Fan S."/>
            <person name="Wang J."/>
            <person name="Dai J."/>
            <person name="Zhu P."/>
            <person name="Chen Z."/>
        </authorList>
    </citation>
    <scope>X-RAY CRYSTALLOGRAPHY (2.70 ANGSTROMS)</scope>
</reference>
<reference evidence="16 17" key="12">
    <citation type="journal article" date="2022" name="Nature">
        <title>Structure of the NuA4 acetyltransferase complex bound to the nucleosome.</title>
        <authorList>
            <person name="Qu K."/>
            <person name="Chen K."/>
            <person name="Wang H."/>
            <person name="Li X."/>
            <person name="Chen Z."/>
        </authorList>
    </citation>
    <scope>STRUCTURE BY ELECTRON MICROSCOPY (3.40 ANGSTROMS)</scope>
</reference>
<evidence type="ECO:0000255" key="1"/>
<evidence type="ECO:0000256" key="2">
    <source>
        <dbReference type="SAM" id="MobiDB-lite"/>
    </source>
</evidence>
<evidence type="ECO:0000269" key="3">
    <source>
    </source>
</evidence>
<evidence type="ECO:0000269" key="4">
    <source>
    </source>
</evidence>
<evidence type="ECO:0000269" key="5">
    <source>
    </source>
</evidence>
<evidence type="ECO:0000269" key="6">
    <source>
    </source>
</evidence>
<evidence type="ECO:0000269" key="7">
    <source>
    </source>
</evidence>
<evidence type="ECO:0000269" key="8">
    <source>
    </source>
</evidence>
<evidence type="ECO:0000269" key="9">
    <source>
    </source>
</evidence>
<evidence type="ECO:0000269" key="10">
    <source>
    </source>
</evidence>
<evidence type="ECO:0000305" key="11"/>
<evidence type="ECO:0007744" key="12">
    <source>
        <dbReference type="PDB" id="5J9Q"/>
    </source>
</evidence>
<evidence type="ECO:0007744" key="13">
    <source>
        <dbReference type="PDB" id="5J9T"/>
    </source>
</evidence>
<evidence type="ECO:0007744" key="14">
    <source>
        <dbReference type="PDB" id="5J9U"/>
    </source>
</evidence>
<evidence type="ECO:0007744" key="15">
    <source>
        <dbReference type="PDB" id="5J9W"/>
    </source>
</evidence>
<evidence type="ECO:0007744" key="16">
    <source>
        <dbReference type="PDB" id="7VVU"/>
    </source>
</evidence>
<evidence type="ECO:0007744" key="17">
    <source>
        <dbReference type="PDB" id="7VVZ"/>
    </source>
</evidence>
<evidence type="ECO:0007829" key="18">
    <source>
        <dbReference type="PDB" id="5J9T"/>
    </source>
</evidence>